<organism>
    <name type="scientific">Salmonella paratyphi B (strain ATCC BAA-1250 / SPB7)</name>
    <dbReference type="NCBI Taxonomy" id="1016998"/>
    <lineage>
        <taxon>Bacteria</taxon>
        <taxon>Pseudomonadati</taxon>
        <taxon>Pseudomonadota</taxon>
        <taxon>Gammaproteobacteria</taxon>
        <taxon>Enterobacterales</taxon>
        <taxon>Enterobacteriaceae</taxon>
        <taxon>Salmonella</taxon>
    </lineage>
</organism>
<reference key="1">
    <citation type="submission" date="2007-11" db="EMBL/GenBank/DDBJ databases">
        <authorList>
            <consortium name="The Salmonella enterica serovar Paratyphi B Genome Sequencing Project"/>
            <person name="McClelland M."/>
            <person name="Sanderson E.K."/>
            <person name="Porwollik S."/>
            <person name="Spieth J."/>
            <person name="Clifton W.S."/>
            <person name="Fulton R."/>
            <person name="Cordes M."/>
            <person name="Wollam A."/>
            <person name="Shah N."/>
            <person name="Pepin K."/>
            <person name="Bhonagiri V."/>
            <person name="Nash W."/>
            <person name="Johnson M."/>
            <person name="Thiruvilangam P."/>
            <person name="Wilson R."/>
        </authorList>
    </citation>
    <scope>NUCLEOTIDE SEQUENCE [LARGE SCALE GENOMIC DNA]</scope>
    <source>
        <strain>ATCC BAA-1250 / SPB7</strain>
    </source>
</reference>
<comment type="function">
    <text evidence="1">Transcriptional regulator that represses the expression of the lsr operon in the absence of the quorum-sensing signaling molecule autoinducer 2 (AI-2) (By similarity). It also represses the expression of the lsrRK operon (By similarity). Acts by binding to the intergenic region between the lsr operon and lsrR (By similarity). In the presence of phosphorylated autoinducer-2 (phospho-AI-2), LsrR is inactivated, leading to the transcription of the genes (By similarity).</text>
</comment>
<comment type="activity regulation">
    <text evidence="1">Inactivated by phosphorylated autoinducer-2 (phospho-AI-2) (By similarity). Phospho-AI-2 acts by binding to LsrR, which is then unable to bind to the promoter regions, allowing the transcription of the target genes (By similarity).</text>
</comment>
<comment type="subcellular location">
    <subcellularLocation>
        <location evidence="2">Cytoplasm</location>
    </subcellularLocation>
</comment>
<comment type="similarity">
    <text evidence="2">Belongs to the SorC transcriptional regulatory family.</text>
</comment>
<proteinExistence type="inferred from homology"/>
<feature type="chain" id="PRO_0000351621" description="Transcriptional regulator LsrR">
    <location>
        <begin position="1"/>
        <end position="319"/>
    </location>
</feature>
<feature type="DNA-binding region" description="H-T-H motif" evidence="2">
    <location>
        <begin position="32"/>
        <end position="55"/>
    </location>
</feature>
<dbReference type="EMBL" id="CP000886">
    <property type="protein sequence ID" value="ABX70337.1"/>
    <property type="molecule type" value="Genomic_DNA"/>
</dbReference>
<dbReference type="RefSeq" id="WP_001283049.1">
    <property type="nucleotide sequence ID" value="NC_010102.1"/>
</dbReference>
<dbReference type="SMR" id="A9MZF9"/>
<dbReference type="KEGG" id="spq:SPAB_05046"/>
<dbReference type="PATRIC" id="fig|1016998.12.peg.4737"/>
<dbReference type="HOGENOM" id="CLU_054506_0_1_6"/>
<dbReference type="BioCyc" id="SENT1016998:SPAB_RS20535-MONOMER"/>
<dbReference type="Proteomes" id="UP000008556">
    <property type="component" value="Chromosome"/>
</dbReference>
<dbReference type="GO" id="GO:0005737">
    <property type="term" value="C:cytoplasm"/>
    <property type="evidence" value="ECO:0007669"/>
    <property type="project" value="UniProtKB-SubCell"/>
</dbReference>
<dbReference type="GO" id="GO:0030246">
    <property type="term" value="F:carbohydrate binding"/>
    <property type="evidence" value="ECO:0007669"/>
    <property type="project" value="InterPro"/>
</dbReference>
<dbReference type="GO" id="GO:0003677">
    <property type="term" value="F:DNA binding"/>
    <property type="evidence" value="ECO:0007669"/>
    <property type="project" value="UniProtKB-KW"/>
</dbReference>
<dbReference type="FunFam" id="1.10.10.10:FF:000195">
    <property type="entry name" value="LsrR family transcriptional regulator"/>
    <property type="match status" value="1"/>
</dbReference>
<dbReference type="Gene3D" id="3.40.50.1360">
    <property type="match status" value="1"/>
</dbReference>
<dbReference type="Gene3D" id="1.10.10.10">
    <property type="entry name" value="Winged helix-like DNA-binding domain superfamily/Winged helix DNA-binding domain"/>
    <property type="match status" value="1"/>
</dbReference>
<dbReference type="InterPro" id="IPR037171">
    <property type="entry name" value="NagB/RpiA_transferase-like"/>
</dbReference>
<dbReference type="InterPro" id="IPR051054">
    <property type="entry name" value="SorC_transcr_regulators"/>
</dbReference>
<dbReference type="InterPro" id="IPR007324">
    <property type="entry name" value="Sugar-bd_dom_put"/>
</dbReference>
<dbReference type="InterPro" id="IPR036388">
    <property type="entry name" value="WH-like_DNA-bd_sf"/>
</dbReference>
<dbReference type="NCBIfam" id="NF011947">
    <property type="entry name" value="PRK15418.1"/>
    <property type="match status" value="1"/>
</dbReference>
<dbReference type="PANTHER" id="PTHR34294:SF1">
    <property type="entry name" value="TRANSCRIPTIONAL REGULATOR LSRR"/>
    <property type="match status" value="1"/>
</dbReference>
<dbReference type="PANTHER" id="PTHR34294">
    <property type="entry name" value="TRANSCRIPTIONAL REGULATOR-RELATED"/>
    <property type="match status" value="1"/>
</dbReference>
<dbReference type="Pfam" id="PF04198">
    <property type="entry name" value="Sugar-bind"/>
    <property type="match status" value="1"/>
</dbReference>
<dbReference type="SUPFAM" id="SSF100950">
    <property type="entry name" value="NagB/RpiA/CoA transferase-like"/>
    <property type="match status" value="1"/>
</dbReference>
<gene>
    <name type="primary">lsrR</name>
    <name type="ordered locus">SPAB_05046</name>
</gene>
<accession>A9MZF9</accession>
<name>LSRR_SALPB</name>
<keyword id="KW-0963">Cytoplasm</keyword>
<keyword id="KW-0238">DNA-binding</keyword>
<keyword id="KW-0678">Repressor</keyword>
<keyword id="KW-0804">Transcription</keyword>
<keyword id="KW-0805">Transcription regulation</keyword>
<protein>
    <recommendedName>
        <fullName evidence="1">Transcriptional regulator LsrR</fullName>
    </recommendedName>
</protein>
<sequence length="319" mass="34450">MSDNTLVSDYGMCEEEQVARIAWFYYHDGLTQSEISERLGLTRLKVSRLLEKGHQSGIIRVQINSRFEGCLEYENALRNHFALQNIRVLPALPDADIGLRLGIGAAHMLMESLRPQQLLAVGFGEATMTTLKRLSGFISAQQIRLVTLSGGVGPYMTGIGQLDAACSVSIMPAPLRASSQEIACTLRNENSVRDVMLTAQAADAAIVGIGAINQKDQASILKSGYITQGEQLMIGRKGAVGDILGYFFDAHGEIIPDIKIHNELIGLKLNSLSTIPTVIGVAGGEQKAEAIIAAMRGNYINALVTDQKTAGKIIQLIEK</sequence>
<evidence type="ECO:0000250" key="1">
    <source>
        <dbReference type="UniProtKB" id="Q8ZKQ5"/>
    </source>
</evidence>
<evidence type="ECO:0000305" key="2"/>